<name>LEUD_HERA2</name>
<gene>
    <name evidence="1" type="primary">leuD</name>
    <name type="ordered locus">Haur_4440</name>
</gene>
<feature type="chain" id="PRO_1000135810" description="3-isopropylmalate dehydratase small subunit">
    <location>
        <begin position="1"/>
        <end position="196"/>
    </location>
</feature>
<evidence type="ECO:0000255" key="1">
    <source>
        <dbReference type="HAMAP-Rule" id="MF_01031"/>
    </source>
</evidence>
<dbReference type="EC" id="4.2.1.33" evidence="1"/>
<dbReference type="EMBL" id="CP000875">
    <property type="protein sequence ID" value="ABX07072.1"/>
    <property type="molecule type" value="Genomic_DNA"/>
</dbReference>
<dbReference type="SMR" id="A9AZ32"/>
<dbReference type="FunCoup" id="A9AZ32">
    <property type="interactions" value="412"/>
</dbReference>
<dbReference type="STRING" id="316274.Haur_4440"/>
<dbReference type="KEGG" id="hau:Haur_4440"/>
<dbReference type="eggNOG" id="COG0066">
    <property type="taxonomic scope" value="Bacteria"/>
</dbReference>
<dbReference type="HOGENOM" id="CLU_081378_0_3_0"/>
<dbReference type="InParanoid" id="A9AZ32"/>
<dbReference type="UniPathway" id="UPA00048">
    <property type="reaction ID" value="UER00071"/>
</dbReference>
<dbReference type="Proteomes" id="UP000000787">
    <property type="component" value="Chromosome"/>
</dbReference>
<dbReference type="GO" id="GO:0009316">
    <property type="term" value="C:3-isopropylmalate dehydratase complex"/>
    <property type="evidence" value="ECO:0007669"/>
    <property type="project" value="InterPro"/>
</dbReference>
<dbReference type="GO" id="GO:0003861">
    <property type="term" value="F:3-isopropylmalate dehydratase activity"/>
    <property type="evidence" value="ECO:0007669"/>
    <property type="project" value="UniProtKB-UniRule"/>
</dbReference>
<dbReference type="GO" id="GO:0009098">
    <property type="term" value="P:L-leucine biosynthetic process"/>
    <property type="evidence" value="ECO:0007669"/>
    <property type="project" value="UniProtKB-UniRule"/>
</dbReference>
<dbReference type="CDD" id="cd01577">
    <property type="entry name" value="IPMI_Swivel"/>
    <property type="match status" value="1"/>
</dbReference>
<dbReference type="FunFam" id="3.20.19.10:FF:000003">
    <property type="entry name" value="3-isopropylmalate dehydratase small subunit"/>
    <property type="match status" value="1"/>
</dbReference>
<dbReference type="Gene3D" id="3.20.19.10">
    <property type="entry name" value="Aconitase, domain 4"/>
    <property type="match status" value="1"/>
</dbReference>
<dbReference type="HAMAP" id="MF_01031">
    <property type="entry name" value="LeuD_type1"/>
    <property type="match status" value="1"/>
</dbReference>
<dbReference type="InterPro" id="IPR004431">
    <property type="entry name" value="3-IsopropMal_deHydase_ssu"/>
</dbReference>
<dbReference type="InterPro" id="IPR015928">
    <property type="entry name" value="Aconitase/3IPM_dehydase_swvl"/>
</dbReference>
<dbReference type="InterPro" id="IPR000573">
    <property type="entry name" value="AconitaseA/IPMdHydase_ssu_swvl"/>
</dbReference>
<dbReference type="InterPro" id="IPR033940">
    <property type="entry name" value="IPMI_Swivel"/>
</dbReference>
<dbReference type="InterPro" id="IPR050075">
    <property type="entry name" value="LeuD"/>
</dbReference>
<dbReference type="NCBIfam" id="TIGR00171">
    <property type="entry name" value="leuD"/>
    <property type="match status" value="1"/>
</dbReference>
<dbReference type="NCBIfam" id="NF002458">
    <property type="entry name" value="PRK01641.1"/>
    <property type="match status" value="1"/>
</dbReference>
<dbReference type="PANTHER" id="PTHR43345:SF5">
    <property type="entry name" value="3-ISOPROPYLMALATE DEHYDRATASE SMALL SUBUNIT"/>
    <property type="match status" value="1"/>
</dbReference>
<dbReference type="PANTHER" id="PTHR43345">
    <property type="entry name" value="3-ISOPROPYLMALATE DEHYDRATASE SMALL SUBUNIT 2-RELATED-RELATED"/>
    <property type="match status" value="1"/>
</dbReference>
<dbReference type="Pfam" id="PF00694">
    <property type="entry name" value="Aconitase_C"/>
    <property type="match status" value="1"/>
</dbReference>
<dbReference type="SUPFAM" id="SSF52016">
    <property type="entry name" value="LeuD/IlvD-like"/>
    <property type="match status" value="1"/>
</dbReference>
<accession>A9AZ32</accession>
<comment type="function">
    <text evidence="1">Catalyzes the isomerization between 2-isopropylmalate and 3-isopropylmalate, via the formation of 2-isopropylmaleate.</text>
</comment>
<comment type="catalytic activity">
    <reaction evidence="1">
        <text>(2R,3S)-3-isopropylmalate = (2S)-2-isopropylmalate</text>
        <dbReference type="Rhea" id="RHEA:32287"/>
        <dbReference type="ChEBI" id="CHEBI:1178"/>
        <dbReference type="ChEBI" id="CHEBI:35121"/>
        <dbReference type="EC" id="4.2.1.33"/>
    </reaction>
</comment>
<comment type="pathway">
    <text evidence="1">Amino-acid biosynthesis; L-leucine biosynthesis; L-leucine from 3-methyl-2-oxobutanoate: step 2/4.</text>
</comment>
<comment type="subunit">
    <text evidence="1">Heterodimer of LeuC and LeuD.</text>
</comment>
<comment type="similarity">
    <text evidence="1">Belongs to the LeuD family. LeuD type 1 subfamily.</text>
</comment>
<proteinExistence type="inferred from homology"/>
<reference key="1">
    <citation type="journal article" date="2011" name="Stand. Genomic Sci.">
        <title>Complete genome sequence of the filamentous gliding predatory bacterium Herpetosiphon aurantiacus type strain (114-95(T)).</title>
        <authorList>
            <person name="Kiss H."/>
            <person name="Nett M."/>
            <person name="Domin N."/>
            <person name="Martin K."/>
            <person name="Maresca J.A."/>
            <person name="Copeland A."/>
            <person name="Lapidus A."/>
            <person name="Lucas S."/>
            <person name="Berry K.W."/>
            <person name="Glavina Del Rio T."/>
            <person name="Dalin E."/>
            <person name="Tice H."/>
            <person name="Pitluck S."/>
            <person name="Richardson P."/>
            <person name="Bruce D."/>
            <person name="Goodwin L."/>
            <person name="Han C."/>
            <person name="Detter J.C."/>
            <person name="Schmutz J."/>
            <person name="Brettin T."/>
            <person name="Land M."/>
            <person name="Hauser L."/>
            <person name="Kyrpides N.C."/>
            <person name="Ivanova N."/>
            <person name="Goeker M."/>
            <person name="Woyke T."/>
            <person name="Klenk H.P."/>
            <person name="Bryant D.A."/>
        </authorList>
    </citation>
    <scope>NUCLEOTIDE SEQUENCE [LARGE SCALE GENOMIC DNA]</scope>
    <source>
        <strain>ATCC 23779 / DSM 785 / 114-95</strain>
    </source>
</reference>
<protein>
    <recommendedName>
        <fullName evidence="1">3-isopropylmalate dehydratase small subunit</fullName>
        <ecNumber evidence="1">4.2.1.33</ecNumber>
    </recommendedName>
    <alternativeName>
        <fullName evidence="1">Alpha-IPM isomerase</fullName>
        <shortName evidence="1">IPMI</shortName>
    </alternativeName>
    <alternativeName>
        <fullName evidence="1">Isopropylmalate isomerase</fullName>
    </alternativeName>
</protein>
<keyword id="KW-0028">Amino-acid biosynthesis</keyword>
<keyword id="KW-0100">Branched-chain amino acid biosynthesis</keyword>
<keyword id="KW-0432">Leucine biosynthesis</keyword>
<keyword id="KW-0456">Lyase</keyword>
<organism>
    <name type="scientific">Herpetosiphon aurantiacus (strain ATCC 23779 / DSM 785 / 114-95)</name>
    <dbReference type="NCBI Taxonomy" id="316274"/>
    <lineage>
        <taxon>Bacteria</taxon>
        <taxon>Bacillati</taxon>
        <taxon>Chloroflexota</taxon>
        <taxon>Chloroflexia</taxon>
        <taxon>Herpetosiphonales</taxon>
        <taxon>Herpetosiphonaceae</taxon>
        <taxon>Herpetosiphon</taxon>
    </lineage>
</organism>
<sequence>MQPINTFQAKAVALPIENIDTDQIIPARYLKVTDKNGLGEALFTDWRGEPDFVLNQPYAQGAGVLIAGHNFGCGSSREHAPWALQGFGFQAVISTYFADIFKGNALKNGLLPIVVDAPTLARLTEQCLANQTIDVSVDLENQQVHVAGETISFPIDAFSKHCLLHGVDQLGYIQAQETAIQAYEASHAARVNTVGA</sequence>